<comment type="function">
    <text evidence="1">F(1)F(0) ATP synthase produces ATP from ADP in the presence of a proton or sodium gradient. F-type ATPases consist of two structural domains, F(1) containing the extramembraneous catalytic core and F(0) containing the membrane proton channel, linked together by a central stalk and a peripheral stalk. During catalysis, ATP synthesis in the catalytic domain of F(1) is coupled via a rotary mechanism of the central stalk subunits to proton translocation.</text>
</comment>
<comment type="function">
    <text evidence="1">This protein is part of the stalk that links CF(0) to CF(1). It either transmits conformational changes from CF(0) to CF(1) or is implicated in proton conduction.</text>
</comment>
<comment type="subunit">
    <text evidence="1">F-type ATPases have 2 components, F(1) - the catalytic core - and F(0) - the membrane proton channel. F(1) has five subunits: alpha(3), beta(3), gamma(1), delta(1), epsilon(1). F(0) has three main subunits: a(1), b(2) and c(10-14). The alpha and beta chains form an alternating ring which encloses part of the gamma chain. F(1) is attached to F(0) by a central stalk formed by the gamma and epsilon chains, while a peripheral stalk is formed by the delta and b chains.</text>
</comment>
<comment type="subcellular location">
    <subcellularLocation>
        <location evidence="1">Cell membrane</location>
        <topology evidence="1">Peripheral membrane protein</topology>
    </subcellularLocation>
</comment>
<comment type="similarity">
    <text evidence="1">Belongs to the ATPase delta chain family.</text>
</comment>
<feature type="chain" id="PRO_1000184755" description="ATP synthase subunit delta">
    <location>
        <begin position="1"/>
        <end position="186"/>
    </location>
</feature>
<name>ATPD_MYCAP</name>
<sequence>MFIKANADGYALALYDLHKEEKHVSSTYENILSFYELLSNDKEVFSFFNSSKIGLEEKHKIADELVQENKNLKTFANFLKLLISKNNSPLLLQALSIYIRLVESELNILRAKLISAFEIDNQTKIKIIEKLENKYNKKIKLTTFIDKSLIFGFKIVIGNDIIEQNAKADLEKISSLINNKNGDLNG</sequence>
<keyword id="KW-0066">ATP synthesis</keyword>
<keyword id="KW-1003">Cell membrane</keyword>
<keyword id="KW-0139">CF(1)</keyword>
<keyword id="KW-0375">Hydrogen ion transport</keyword>
<keyword id="KW-0406">Ion transport</keyword>
<keyword id="KW-0472">Membrane</keyword>
<keyword id="KW-1185">Reference proteome</keyword>
<keyword id="KW-0813">Transport</keyword>
<evidence type="ECO:0000255" key="1">
    <source>
        <dbReference type="HAMAP-Rule" id="MF_01416"/>
    </source>
</evidence>
<organism>
    <name type="scientific">Mycoplasmopsis agalactiae (strain NCTC 10123 / CIP 59.7 / PG2)</name>
    <name type="common">Mycoplasma agalactiae</name>
    <dbReference type="NCBI Taxonomy" id="347257"/>
    <lineage>
        <taxon>Bacteria</taxon>
        <taxon>Bacillati</taxon>
        <taxon>Mycoplasmatota</taxon>
        <taxon>Mycoplasmoidales</taxon>
        <taxon>Metamycoplasmataceae</taxon>
        <taxon>Mycoplasmopsis</taxon>
    </lineage>
</organism>
<accession>A5IYE2</accession>
<proteinExistence type="inferred from homology"/>
<dbReference type="EMBL" id="CU179680">
    <property type="protein sequence ID" value="CAL59051.1"/>
    <property type="molecule type" value="Genomic_DNA"/>
</dbReference>
<dbReference type="RefSeq" id="WP_011949526.1">
    <property type="nucleotide sequence ID" value="NC_009497.1"/>
</dbReference>
<dbReference type="SMR" id="A5IYE2"/>
<dbReference type="STRING" id="347257.MAG3530"/>
<dbReference type="GeneID" id="93358111"/>
<dbReference type="KEGG" id="maa:MAG3530"/>
<dbReference type="HOGENOM" id="CLU_085114_4_2_14"/>
<dbReference type="Proteomes" id="UP000007065">
    <property type="component" value="Chromosome"/>
</dbReference>
<dbReference type="GO" id="GO:0005886">
    <property type="term" value="C:plasma membrane"/>
    <property type="evidence" value="ECO:0007669"/>
    <property type="project" value="UniProtKB-SubCell"/>
</dbReference>
<dbReference type="GO" id="GO:0045259">
    <property type="term" value="C:proton-transporting ATP synthase complex"/>
    <property type="evidence" value="ECO:0007669"/>
    <property type="project" value="UniProtKB-KW"/>
</dbReference>
<dbReference type="GO" id="GO:0046933">
    <property type="term" value="F:proton-transporting ATP synthase activity, rotational mechanism"/>
    <property type="evidence" value="ECO:0007669"/>
    <property type="project" value="UniProtKB-UniRule"/>
</dbReference>
<dbReference type="Gene3D" id="1.10.520.20">
    <property type="entry name" value="N-terminal domain of the delta subunit of the F1F0-ATP synthase"/>
    <property type="match status" value="1"/>
</dbReference>
<dbReference type="HAMAP" id="MF_01416">
    <property type="entry name" value="ATP_synth_delta_bact"/>
    <property type="match status" value="1"/>
</dbReference>
<dbReference type="InterPro" id="IPR026015">
    <property type="entry name" value="ATP_synth_OSCP/delta_N_sf"/>
</dbReference>
<dbReference type="InterPro" id="IPR000711">
    <property type="entry name" value="ATPase_OSCP/dsu"/>
</dbReference>
<dbReference type="NCBIfam" id="TIGR01145">
    <property type="entry name" value="ATP_synt_delta"/>
    <property type="match status" value="1"/>
</dbReference>
<dbReference type="PANTHER" id="PTHR11910">
    <property type="entry name" value="ATP SYNTHASE DELTA CHAIN"/>
    <property type="match status" value="1"/>
</dbReference>
<dbReference type="Pfam" id="PF00213">
    <property type="entry name" value="OSCP"/>
    <property type="match status" value="1"/>
</dbReference>
<dbReference type="PRINTS" id="PR00125">
    <property type="entry name" value="ATPASEDELTA"/>
</dbReference>
<dbReference type="SUPFAM" id="SSF47928">
    <property type="entry name" value="N-terminal domain of the delta subunit of the F1F0-ATP synthase"/>
    <property type="match status" value="1"/>
</dbReference>
<protein>
    <recommendedName>
        <fullName evidence="1">ATP synthase subunit delta</fullName>
    </recommendedName>
    <alternativeName>
        <fullName evidence="1">ATP synthase F(1) sector subunit delta</fullName>
    </alternativeName>
    <alternativeName>
        <fullName evidence="1">F-type ATPase subunit delta</fullName>
        <shortName evidence="1">F-ATPase subunit delta</shortName>
    </alternativeName>
</protein>
<gene>
    <name evidence="1" type="primary">atpH</name>
    <name type="ordered locus">MAG3530</name>
</gene>
<reference key="1">
    <citation type="journal article" date="2007" name="PLoS Genet.">
        <title>Being pathogenic, plastic, and sexual while living with a nearly minimal bacterial genome.</title>
        <authorList>
            <person name="Sirand-Pugnet P."/>
            <person name="Lartigue C."/>
            <person name="Marenda M."/>
            <person name="Jacob D."/>
            <person name="Barre A."/>
            <person name="Barbe V."/>
            <person name="Schenowitz C."/>
            <person name="Mangenot S."/>
            <person name="Couloux A."/>
            <person name="Segurens B."/>
            <person name="de Daruvar A."/>
            <person name="Blanchard A."/>
            <person name="Citti C."/>
        </authorList>
    </citation>
    <scope>NUCLEOTIDE SEQUENCE [LARGE SCALE GENOMIC DNA]</scope>
    <source>
        <strain>NCTC 10123 / CIP 59.7 / PG2</strain>
    </source>
</reference>